<organism>
    <name type="scientific">Paspalum notatum</name>
    <name type="common">Bahia grass</name>
    <dbReference type="NCBI Taxonomy" id="147272"/>
    <lineage>
        <taxon>Eukaryota</taxon>
        <taxon>Viridiplantae</taxon>
        <taxon>Streptophyta</taxon>
        <taxon>Embryophyta</taxon>
        <taxon>Tracheophyta</taxon>
        <taxon>Spermatophyta</taxon>
        <taxon>Magnoliopsida</taxon>
        <taxon>Liliopsida</taxon>
        <taxon>Poales</taxon>
        <taxon>Poaceae</taxon>
        <taxon>PACMAD clade</taxon>
        <taxon>Panicoideae</taxon>
        <taxon>Andropogonodae</taxon>
        <taxon>Paspaleae</taxon>
        <taxon>Paspalinae</taxon>
        <taxon>Paspalum</taxon>
    </lineage>
</organism>
<accession>P85293</accession>
<protein>
    <recommendedName>
        <fullName evidence="1">Expansin-B</fullName>
    </recommendedName>
    <alternativeName>
        <fullName evidence="1">Beta-expansin</fullName>
    </alternativeName>
    <alternativeName>
        <fullName evidence="6">Pollen allergen Pas n 1</fullName>
    </alternativeName>
    <allergenName evidence="6">Pas n 1</allergenName>
</protein>
<keyword id="KW-0020">Allergen</keyword>
<keyword id="KW-0134">Cell wall</keyword>
<keyword id="KW-0961">Cell wall biogenesis/degradation</keyword>
<keyword id="KW-0903">Direct protein sequencing</keyword>
<keyword id="KW-0472">Membrane</keyword>
<keyword id="KW-0964">Secreted</keyword>
<reference evidence="7" key="1">
    <citation type="journal article" date="2009" name="Open Allergy J.">
        <title>Characterization of the group I allergen of bahia grass pollen.</title>
        <authorList>
            <person name="White J.M."/>
            <person name="Majidi A."/>
            <person name="Naser S.A."/>
            <person name="Sweeney M.J."/>
            <person name="White R.S."/>
        </authorList>
    </citation>
    <scope>PROTEIN SEQUENCE</scope>
    <scope>ALLERGEN</scope>
    <source>
        <tissue evidence="5">Pollen</tissue>
    </source>
</reference>
<evidence type="ECO:0000250" key="1">
    <source>
        <dbReference type="UniProtKB" id="Q07154"/>
    </source>
</evidence>
<evidence type="ECO:0000250" key="2">
    <source>
        <dbReference type="UniProtKB" id="Q336T5"/>
    </source>
</evidence>
<evidence type="ECO:0000255" key="3"/>
<evidence type="ECO:0000256" key="4">
    <source>
        <dbReference type="SAM" id="MobiDB-lite"/>
    </source>
</evidence>
<evidence type="ECO:0000269" key="5">
    <source ref="1"/>
</evidence>
<evidence type="ECO:0000303" key="6">
    <source ref="1"/>
</evidence>
<evidence type="ECO:0000305" key="7"/>
<comment type="function">
    <text evidence="1">May aid fertilization by loosening the cell wall of the stigma and style, thereby facilitating penetration of the pollen tube. Acts selectively on grass cell walls, which are relatively poor in pectins and xyloglucans and rich in glucuronoarabinoxylans and (1-3),(1-4)-beta-D-glucans, when compared with cell walls of other angiosperms, including other monocots (By similarity).</text>
</comment>
<comment type="subcellular location">
    <subcellularLocation>
        <location evidence="2">Secreted</location>
        <location evidence="2">Cell wall</location>
    </subcellularLocation>
    <subcellularLocation>
        <location evidence="2">Membrane</location>
        <topology evidence="2">Peripheral membrane protein</topology>
    </subcellularLocation>
</comment>
<comment type="allergen">
    <text evidence="5">Causes an allergic reaction in human. Binds to IgE.</text>
</comment>
<comment type="similarity">
    <text evidence="3">Belongs to the expansin family. Expansin B subfamily.</text>
</comment>
<sequence>GPPKVAPGKXISASFGGEWL</sequence>
<proteinExistence type="evidence at protein level"/>
<name>EXPB_PASNO</name>
<feature type="chain" id="PRO_0000381734" description="Expansin-B">
    <location>
        <begin position="1"/>
        <end position="20" status="greater than"/>
    </location>
</feature>
<feature type="region of interest" description="Disordered" evidence="4">
    <location>
        <begin position="1"/>
        <end position="20"/>
    </location>
</feature>
<feature type="non-terminal residue" evidence="6">
    <location>
        <position position="20"/>
    </location>
</feature>
<dbReference type="Allergome" id="874">
    <property type="allergen name" value="Pas n 1"/>
</dbReference>
<dbReference type="GO" id="GO:0005576">
    <property type="term" value="C:extracellular region"/>
    <property type="evidence" value="ECO:0007669"/>
    <property type="project" value="UniProtKB-KW"/>
</dbReference>
<dbReference type="GO" id="GO:0016020">
    <property type="term" value="C:membrane"/>
    <property type="evidence" value="ECO:0007669"/>
    <property type="project" value="UniProtKB-SubCell"/>
</dbReference>
<dbReference type="GO" id="GO:0071555">
    <property type="term" value="P:cell wall organization"/>
    <property type="evidence" value="ECO:0007669"/>
    <property type="project" value="UniProtKB-KW"/>
</dbReference>